<feature type="chain" id="PRO_1000114620" description="Nucleoid-associated protein Lcho_1975">
    <location>
        <begin position="1"/>
        <end position="108"/>
    </location>
</feature>
<proteinExistence type="inferred from homology"/>
<comment type="function">
    <text evidence="1">Binds to DNA and alters its conformation. May be involved in regulation of gene expression, nucleoid organization and DNA protection.</text>
</comment>
<comment type="subunit">
    <text evidence="1">Homodimer.</text>
</comment>
<comment type="subcellular location">
    <subcellularLocation>
        <location evidence="1">Cytoplasm</location>
        <location evidence="1">Nucleoid</location>
    </subcellularLocation>
</comment>
<comment type="similarity">
    <text evidence="1">Belongs to the YbaB/EbfC family.</text>
</comment>
<name>Y1975_LEPCP</name>
<sequence length="108" mass="11642">MIKGQLAGLMKQAQAMQDNLKKAQDELANVEVEGQSGAGLVKVVMTCKHDVKRLSIDPSLLADDKDMLEDLVAAAFNDAVRRAEAVSQEKMGKLTAGMPLPPGMKFPF</sequence>
<dbReference type="EMBL" id="CP001013">
    <property type="protein sequence ID" value="ACB34242.1"/>
    <property type="molecule type" value="Genomic_DNA"/>
</dbReference>
<dbReference type="RefSeq" id="WP_012347002.1">
    <property type="nucleotide sequence ID" value="NC_010524.1"/>
</dbReference>
<dbReference type="SMR" id="B1Y1E3"/>
<dbReference type="STRING" id="395495.Lcho_1975"/>
<dbReference type="KEGG" id="lch:Lcho_1975"/>
<dbReference type="eggNOG" id="COG0718">
    <property type="taxonomic scope" value="Bacteria"/>
</dbReference>
<dbReference type="HOGENOM" id="CLU_140930_0_0_4"/>
<dbReference type="OrthoDB" id="9808738at2"/>
<dbReference type="Proteomes" id="UP000001693">
    <property type="component" value="Chromosome"/>
</dbReference>
<dbReference type="GO" id="GO:0043590">
    <property type="term" value="C:bacterial nucleoid"/>
    <property type="evidence" value="ECO:0007669"/>
    <property type="project" value="UniProtKB-UniRule"/>
</dbReference>
<dbReference type="GO" id="GO:0005829">
    <property type="term" value="C:cytosol"/>
    <property type="evidence" value="ECO:0007669"/>
    <property type="project" value="TreeGrafter"/>
</dbReference>
<dbReference type="GO" id="GO:0003677">
    <property type="term" value="F:DNA binding"/>
    <property type="evidence" value="ECO:0007669"/>
    <property type="project" value="UniProtKB-UniRule"/>
</dbReference>
<dbReference type="FunFam" id="3.30.1310.10:FF:000001">
    <property type="entry name" value="Nucleoid-associated protein YbaB"/>
    <property type="match status" value="1"/>
</dbReference>
<dbReference type="Gene3D" id="3.30.1310.10">
    <property type="entry name" value="Nucleoid-associated protein YbaB-like domain"/>
    <property type="match status" value="1"/>
</dbReference>
<dbReference type="HAMAP" id="MF_00274">
    <property type="entry name" value="DNA_YbaB_EbfC"/>
    <property type="match status" value="1"/>
</dbReference>
<dbReference type="InterPro" id="IPR036894">
    <property type="entry name" value="YbaB-like_sf"/>
</dbReference>
<dbReference type="InterPro" id="IPR004401">
    <property type="entry name" value="YbaB/EbfC"/>
</dbReference>
<dbReference type="NCBIfam" id="TIGR00103">
    <property type="entry name" value="DNA_YbaB_EbfC"/>
    <property type="match status" value="1"/>
</dbReference>
<dbReference type="PANTHER" id="PTHR33449">
    <property type="entry name" value="NUCLEOID-ASSOCIATED PROTEIN YBAB"/>
    <property type="match status" value="1"/>
</dbReference>
<dbReference type="PANTHER" id="PTHR33449:SF1">
    <property type="entry name" value="NUCLEOID-ASSOCIATED PROTEIN YBAB"/>
    <property type="match status" value="1"/>
</dbReference>
<dbReference type="Pfam" id="PF02575">
    <property type="entry name" value="YbaB_DNA_bd"/>
    <property type="match status" value="1"/>
</dbReference>
<dbReference type="PIRSF" id="PIRSF004555">
    <property type="entry name" value="UCP004555"/>
    <property type="match status" value="1"/>
</dbReference>
<dbReference type="SUPFAM" id="SSF82607">
    <property type="entry name" value="YbaB-like"/>
    <property type="match status" value="1"/>
</dbReference>
<reference key="1">
    <citation type="submission" date="2008-03" db="EMBL/GenBank/DDBJ databases">
        <title>Complete sequence of Leptothrix cholodnii SP-6.</title>
        <authorList>
            <consortium name="US DOE Joint Genome Institute"/>
            <person name="Copeland A."/>
            <person name="Lucas S."/>
            <person name="Lapidus A."/>
            <person name="Glavina del Rio T."/>
            <person name="Dalin E."/>
            <person name="Tice H."/>
            <person name="Bruce D."/>
            <person name="Goodwin L."/>
            <person name="Pitluck S."/>
            <person name="Chertkov O."/>
            <person name="Brettin T."/>
            <person name="Detter J.C."/>
            <person name="Han C."/>
            <person name="Kuske C.R."/>
            <person name="Schmutz J."/>
            <person name="Larimer F."/>
            <person name="Land M."/>
            <person name="Hauser L."/>
            <person name="Kyrpides N."/>
            <person name="Lykidis A."/>
            <person name="Emerson D."/>
            <person name="Richardson P."/>
        </authorList>
    </citation>
    <scope>NUCLEOTIDE SEQUENCE [LARGE SCALE GENOMIC DNA]</scope>
    <source>
        <strain>ATCC 51168 / LMG 8142 / SP-6</strain>
    </source>
</reference>
<organism>
    <name type="scientific">Leptothrix cholodnii (strain ATCC 51168 / LMG 8142 / SP-6)</name>
    <name type="common">Leptothrix discophora (strain SP-6)</name>
    <dbReference type="NCBI Taxonomy" id="395495"/>
    <lineage>
        <taxon>Bacteria</taxon>
        <taxon>Pseudomonadati</taxon>
        <taxon>Pseudomonadota</taxon>
        <taxon>Betaproteobacteria</taxon>
        <taxon>Burkholderiales</taxon>
        <taxon>Sphaerotilaceae</taxon>
        <taxon>Leptothrix</taxon>
    </lineage>
</organism>
<evidence type="ECO:0000255" key="1">
    <source>
        <dbReference type="HAMAP-Rule" id="MF_00274"/>
    </source>
</evidence>
<keyword id="KW-0963">Cytoplasm</keyword>
<keyword id="KW-0238">DNA-binding</keyword>
<keyword id="KW-1185">Reference proteome</keyword>
<accession>B1Y1E3</accession>
<protein>
    <recommendedName>
        <fullName evidence="1">Nucleoid-associated protein Lcho_1975</fullName>
    </recommendedName>
</protein>
<gene>
    <name type="ordered locus">Lcho_1975</name>
</gene>